<dbReference type="EMBL" id="Z73246">
    <property type="protein sequence ID" value="CAA97631.1"/>
    <property type="molecule type" value="Genomic_DNA"/>
</dbReference>
<dbReference type="EMBL" id="AY558208">
    <property type="protein sequence ID" value="AAS56534.1"/>
    <property type="molecule type" value="Genomic_DNA"/>
</dbReference>
<dbReference type="EMBL" id="BK006945">
    <property type="protein sequence ID" value="DAA09391.1"/>
    <property type="molecule type" value="Genomic_DNA"/>
</dbReference>
<dbReference type="PIR" id="S64906">
    <property type="entry name" value="S64906"/>
</dbReference>
<dbReference type="RefSeq" id="NP_013175.1">
    <property type="nucleotide sequence ID" value="NM_001181961.1"/>
</dbReference>
<dbReference type="PDB" id="3JCT">
    <property type="method" value="EM"/>
    <property type="resolution" value="3.08 A"/>
    <property type="chains" value="I=1-166"/>
</dbReference>
<dbReference type="PDB" id="6FT6">
    <property type="method" value="EM"/>
    <property type="resolution" value="3.90 A"/>
    <property type="chains" value="I=1-166"/>
</dbReference>
<dbReference type="PDB" id="6M62">
    <property type="method" value="EM"/>
    <property type="resolution" value="3.20 A"/>
    <property type="chains" value="I=1-166"/>
</dbReference>
<dbReference type="PDB" id="6N8J">
    <property type="method" value="EM"/>
    <property type="resolution" value="3.50 A"/>
    <property type="chains" value="I=1-166"/>
</dbReference>
<dbReference type="PDB" id="6N8K">
    <property type="method" value="EM"/>
    <property type="resolution" value="3.60 A"/>
    <property type="chains" value="I=1-166"/>
</dbReference>
<dbReference type="PDB" id="6N8L">
    <property type="method" value="EM"/>
    <property type="resolution" value="3.60 A"/>
    <property type="chains" value="I=1-166"/>
</dbReference>
<dbReference type="PDB" id="6YLG">
    <property type="method" value="EM"/>
    <property type="resolution" value="3.00 A"/>
    <property type="chains" value="I=1-166"/>
</dbReference>
<dbReference type="PDB" id="6YLH">
    <property type="method" value="EM"/>
    <property type="resolution" value="3.10 A"/>
    <property type="chains" value="I=1-166"/>
</dbReference>
<dbReference type="PDB" id="6YLY">
    <property type="method" value="EM"/>
    <property type="resolution" value="3.80 A"/>
    <property type="chains" value="I=1-166"/>
</dbReference>
<dbReference type="PDB" id="7UG6">
    <property type="method" value="EM"/>
    <property type="resolution" value="2.90 A"/>
    <property type="chains" value="I=1-166"/>
</dbReference>
<dbReference type="PDB" id="7UOO">
    <property type="method" value="EM"/>
    <property type="resolution" value="2.34 A"/>
    <property type="chains" value="I=1-166"/>
</dbReference>
<dbReference type="PDB" id="7UQB">
    <property type="method" value="EM"/>
    <property type="resolution" value="2.43 A"/>
    <property type="chains" value="I=1-166"/>
</dbReference>
<dbReference type="PDB" id="7UQZ">
    <property type="method" value="EM"/>
    <property type="resolution" value="2.44 A"/>
    <property type="chains" value="I=1-131"/>
</dbReference>
<dbReference type="PDB" id="7V08">
    <property type="method" value="EM"/>
    <property type="resolution" value="2.36 A"/>
    <property type="chains" value="I=1-166"/>
</dbReference>
<dbReference type="PDB" id="7Z34">
    <property type="method" value="EM"/>
    <property type="resolution" value="3.80 A"/>
    <property type="chains" value="I=1-166"/>
</dbReference>
<dbReference type="PDB" id="8HFR">
    <property type="method" value="EM"/>
    <property type="resolution" value="2.64 A"/>
    <property type="chains" value="ox=1-166"/>
</dbReference>
<dbReference type="PDBsum" id="3JCT"/>
<dbReference type="PDBsum" id="6FT6"/>
<dbReference type="PDBsum" id="6M62"/>
<dbReference type="PDBsum" id="6N8J"/>
<dbReference type="PDBsum" id="6N8K"/>
<dbReference type="PDBsum" id="6N8L"/>
<dbReference type="PDBsum" id="6YLG"/>
<dbReference type="PDBsum" id="6YLH"/>
<dbReference type="PDBsum" id="6YLY"/>
<dbReference type="PDBsum" id="7UG6"/>
<dbReference type="PDBsum" id="7UOO"/>
<dbReference type="PDBsum" id="7UQB"/>
<dbReference type="PDBsum" id="7UQZ"/>
<dbReference type="PDBsum" id="7V08"/>
<dbReference type="PDBsum" id="7Z34"/>
<dbReference type="PDBsum" id="8HFR"/>
<dbReference type="EMDB" id="EMD-0369"/>
<dbReference type="EMDB" id="EMD-0370"/>
<dbReference type="EMDB" id="EMD-0371"/>
<dbReference type="EMDB" id="EMD-10838"/>
<dbReference type="EMDB" id="EMD-10839"/>
<dbReference type="EMDB" id="EMD-10842"/>
<dbReference type="EMDB" id="EMD-14471"/>
<dbReference type="EMDB" id="EMD-26485"/>
<dbReference type="EMDB" id="EMD-26651"/>
<dbReference type="EMDB" id="EMD-26686"/>
<dbReference type="EMDB" id="EMD-26703"/>
<dbReference type="EMDB" id="EMD-26941"/>
<dbReference type="EMDB" id="EMD-30108"/>
<dbReference type="EMDB" id="EMD-34725"/>
<dbReference type="EMDB" id="EMD-4302"/>
<dbReference type="SMR" id="Q08004"/>
<dbReference type="BioGRID" id="31348">
    <property type="interactions" value="265"/>
</dbReference>
<dbReference type="DIP" id="DIP-4920N"/>
<dbReference type="FunCoup" id="Q08004">
    <property type="interactions" value="522"/>
</dbReference>
<dbReference type="IntAct" id="Q08004">
    <property type="interactions" value="105"/>
</dbReference>
<dbReference type="MINT" id="Q08004"/>
<dbReference type="STRING" id="4932.YLR074C"/>
<dbReference type="iPTMnet" id="Q08004"/>
<dbReference type="PaxDb" id="4932-YLR074C"/>
<dbReference type="PeptideAtlas" id="Q08004"/>
<dbReference type="EnsemblFungi" id="YLR074C_mRNA">
    <property type="protein sequence ID" value="YLR074C"/>
    <property type="gene ID" value="YLR074C"/>
</dbReference>
<dbReference type="GeneID" id="850763"/>
<dbReference type="KEGG" id="sce:YLR074C"/>
<dbReference type="AGR" id="SGD:S000004064"/>
<dbReference type="SGD" id="S000004064">
    <property type="gene designation" value="BUD20"/>
</dbReference>
<dbReference type="VEuPathDB" id="FungiDB:YLR074C"/>
<dbReference type="eggNOG" id="KOG3408">
    <property type="taxonomic scope" value="Eukaryota"/>
</dbReference>
<dbReference type="GeneTree" id="ENSGT00390000004173"/>
<dbReference type="HOGENOM" id="CLU_117291_0_0_1"/>
<dbReference type="InParanoid" id="Q08004"/>
<dbReference type="OMA" id="FMARVEQ"/>
<dbReference type="OrthoDB" id="24683at2759"/>
<dbReference type="BioCyc" id="YEAST:G3O-32226-MONOMER"/>
<dbReference type="BioGRID-ORCS" id="850763">
    <property type="hits" value="9 hits in 10 CRISPR screens"/>
</dbReference>
<dbReference type="PRO" id="PR:Q08004"/>
<dbReference type="Proteomes" id="UP000002311">
    <property type="component" value="Chromosome XII"/>
</dbReference>
<dbReference type="RNAct" id="Q08004">
    <property type="molecule type" value="protein"/>
</dbReference>
<dbReference type="GO" id="GO:0005737">
    <property type="term" value="C:cytoplasm"/>
    <property type="evidence" value="ECO:0000314"/>
    <property type="project" value="SGD"/>
</dbReference>
<dbReference type="GO" id="GO:0005634">
    <property type="term" value="C:nucleus"/>
    <property type="evidence" value="ECO:0000314"/>
    <property type="project" value="SGD"/>
</dbReference>
<dbReference type="GO" id="GO:0030687">
    <property type="term" value="C:preribosome, large subunit precursor"/>
    <property type="evidence" value="ECO:0000314"/>
    <property type="project" value="SGD"/>
</dbReference>
<dbReference type="GO" id="GO:0003676">
    <property type="term" value="F:nucleic acid binding"/>
    <property type="evidence" value="ECO:0007669"/>
    <property type="project" value="InterPro"/>
</dbReference>
<dbReference type="GO" id="GO:0043023">
    <property type="term" value="F:ribosomal large subunit binding"/>
    <property type="evidence" value="ECO:0000314"/>
    <property type="project" value="SGD"/>
</dbReference>
<dbReference type="GO" id="GO:0008270">
    <property type="term" value="F:zinc ion binding"/>
    <property type="evidence" value="ECO:0007669"/>
    <property type="project" value="UniProtKB-KW"/>
</dbReference>
<dbReference type="GO" id="GO:0000055">
    <property type="term" value="P:ribosomal large subunit export from nucleus"/>
    <property type="evidence" value="ECO:0000315"/>
    <property type="project" value="SGD"/>
</dbReference>
<dbReference type="FunFam" id="3.30.160.60:FF:000299">
    <property type="entry name" value="Zinc finger protein 593"/>
    <property type="match status" value="1"/>
</dbReference>
<dbReference type="Gene3D" id="3.30.160.60">
    <property type="entry name" value="Classic Zinc Finger"/>
    <property type="match status" value="1"/>
</dbReference>
<dbReference type="InterPro" id="IPR051879">
    <property type="entry name" value="C2H2-ZF_Maturation_Protein"/>
</dbReference>
<dbReference type="InterPro" id="IPR003604">
    <property type="entry name" value="Matrin/U1-like-C_Znf_C2H2"/>
</dbReference>
<dbReference type="InterPro" id="IPR022755">
    <property type="entry name" value="Znf_C2H2_jaz"/>
</dbReference>
<dbReference type="InterPro" id="IPR036236">
    <property type="entry name" value="Znf_C2H2_sf"/>
</dbReference>
<dbReference type="InterPro" id="IPR013087">
    <property type="entry name" value="Znf_C2H2_type"/>
</dbReference>
<dbReference type="PANTHER" id="PTHR46095">
    <property type="entry name" value="ZINC FINGER PROTEIN 593"/>
    <property type="match status" value="1"/>
</dbReference>
<dbReference type="PANTHER" id="PTHR46095:SF1">
    <property type="entry name" value="ZINC FINGER PROTEIN 593"/>
    <property type="match status" value="1"/>
</dbReference>
<dbReference type="Pfam" id="PF12171">
    <property type="entry name" value="zf-C2H2_jaz"/>
    <property type="match status" value="1"/>
</dbReference>
<dbReference type="SMART" id="SM00451">
    <property type="entry name" value="ZnF_U1"/>
    <property type="match status" value="1"/>
</dbReference>
<dbReference type="SUPFAM" id="SSF57667">
    <property type="entry name" value="beta-beta-alpha zinc fingers"/>
    <property type="match status" value="1"/>
</dbReference>
<dbReference type="PROSITE" id="PS00028">
    <property type="entry name" value="ZINC_FINGER_C2H2_1"/>
    <property type="match status" value="1"/>
</dbReference>
<organism>
    <name type="scientific">Saccharomyces cerevisiae (strain ATCC 204508 / S288c)</name>
    <name type="common">Baker's yeast</name>
    <dbReference type="NCBI Taxonomy" id="559292"/>
    <lineage>
        <taxon>Eukaryota</taxon>
        <taxon>Fungi</taxon>
        <taxon>Dikarya</taxon>
        <taxon>Ascomycota</taxon>
        <taxon>Saccharomycotina</taxon>
        <taxon>Saccharomycetes</taxon>
        <taxon>Saccharomycetales</taxon>
        <taxon>Saccharomycetaceae</taxon>
        <taxon>Saccharomyces</taxon>
    </lineage>
</organism>
<evidence type="ECO:0000269" key="1">
    <source>
    </source>
</evidence>
<evidence type="ECO:0000269" key="2">
    <source>
    </source>
</evidence>
<evidence type="ECO:0000269" key="3">
    <source>
    </source>
</evidence>
<evidence type="ECO:0000303" key="4">
    <source>
    </source>
</evidence>
<evidence type="ECO:0000305" key="5"/>
<comment type="function">
    <text evidence="1 3">Involved in pre-60S ribosomal particles maturation by promoting the nuclear export of the 60S ribosome (PubMed:23045392). Involved in positioning the proximal bud pole signal (PubMed:11452010).</text>
</comment>
<comment type="subunit">
    <text evidence="3">Associates with pre-60S ribosomal particles; released from the pre-60S particle very early in the cytoplasm.</text>
</comment>
<comment type="subcellular location">
    <subcellularLocation>
        <location evidence="1 3">Nucleus</location>
    </subcellularLocation>
    <subcellularLocation>
        <location evidence="3">Cytoplasm</location>
    </subcellularLocation>
    <text evidence="3">Shuttles between the nucleus and the cytoplasm.</text>
</comment>
<comment type="miscellaneous">
    <text evidence="2">Present with 5630 molecules/cell in log phase SD medium.</text>
</comment>
<comment type="similarity">
    <text evidence="5">Belongs to the ZNF593/BUD20 C2H2-type zinc-finger protein family.</text>
</comment>
<name>BUD20_YEAST</name>
<keyword id="KW-0002">3D-structure</keyword>
<keyword id="KW-0963">Cytoplasm</keyword>
<keyword id="KW-0479">Metal-binding</keyword>
<keyword id="KW-0539">Nucleus</keyword>
<keyword id="KW-1185">Reference proteome</keyword>
<keyword id="KW-0690">Ribosome biogenesis</keyword>
<keyword id="KW-0862">Zinc</keyword>
<keyword id="KW-0863">Zinc-finger</keyword>
<gene>
    <name evidence="4" type="primary">BUD20</name>
    <name type="ordered locus">YLR074C</name>
</gene>
<feature type="chain" id="PRO_0000046803" description="Bud site selection protein 20">
    <location>
        <begin position="1"/>
        <end position="166"/>
    </location>
</feature>
<feature type="zinc finger region" description="C2H2-type">
    <location>
        <begin position="49"/>
        <end position="73"/>
    </location>
</feature>
<feature type="region of interest" description="Nuclear export signal-like (NES-like)" evidence="3">
    <location>
        <begin position="17"/>
        <end position="31"/>
    </location>
</feature>
<feature type="short sequence motif" description="Nuclear localization signal" evidence="3">
    <location>
        <begin position="7"/>
        <end position="16"/>
    </location>
</feature>
<feature type="mutagenesis site" description="Increased localization to the cytoplasm." evidence="3">
    <location>
        <begin position="7"/>
        <end position="16"/>
    </location>
</feature>
<feature type="mutagenesis site" description="Slightly increased localization to the cytoplasm." evidence="3">
    <original>KRR</original>
    <variation>GGG</variation>
    <location>
        <begin position="12"/>
        <end position="14"/>
    </location>
</feature>
<feature type="mutagenesis site" description="Increased localization to the nucleus." evidence="3">
    <location>
        <begin position="17"/>
        <end position="31"/>
    </location>
</feature>
<feature type="mutagenesis site" description="Slightly increased localization to the nucleus." evidence="3">
    <original>LDLIYNDL</original>
    <variation>RDLRYNDR</variation>
    <location>
        <begin position="18"/>
        <end position="25"/>
    </location>
</feature>
<accession>Q08004</accession>
<accession>D6VY75</accession>
<proteinExistence type="evidence at protein level"/>
<sequence>MGRYSVKRYKTKRRTRDLDLIYNDLSTKESVQKLLNQPLDETKPGLGQHYCIHCAKYMETAIALKTHLKGKVHKRRVKELRGVPYTQEVSDAAAGYNLNKFLNRVQEITQSVGPEKESNEALLKEHLDSTLANVKTTEPTLPWAAADAEANTAAVTEAESTASAST</sequence>
<protein>
    <recommendedName>
        <fullName evidence="4">Bud site selection protein 20</fullName>
    </recommendedName>
</protein>
<reference key="1">
    <citation type="journal article" date="1997" name="Nature">
        <title>The nucleotide sequence of Saccharomyces cerevisiae chromosome XII.</title>
        <authorList>
            <person name="Johnston M."/>
            <person name="Hillier L.W."/>
            <person name="Riles L."/>
            <person name="Albermann K."/>
            <person name="Andre B."/>
            <person name="Ansorge W."/>
            <person name="Benes V."/>
            <person name="Brueckner M."/>
            <person name="Delius H."/>
            <person name="Dubois E."/>
            <person name="Duesterhoeft A."/>
            <person name="Entian K.-D."/>
            <person name="Floeth M."/>
            <person name="Goffeau A."/>
            <person name="Hebling U."/>
            <person name="Heumann K."/>
            <person name="Heuss-Neitzel D."/>
            <person name="Hilbert H."/>
            <person name="Hilger F."/>
            <person name="Kleine K."/>
            <person name="Koetter P."/>
            <person name="Louis E.J."/>
            <person name="Messenguy F."/>
            <person name="Mewes H.-W."/>
            <person name="Miosga T."/>
            <person name="Moestl D."/>
            <person name="Mueller-Auer S."/>
            <person name="Nentwich U."/>
            <person name="Obermaier B."/>
            <person name="Piravandi E."/>
            <person name="Pohl T.M."/>
            <person name="Portetelle D."/>
            <person name="Purnelle B."/>
            <person name="Rechmann S."/>
            <person name="Rieger M."/>
            <person name="Rinke M."/>
            <person name="Rose M."/>
            <person name="Scharfe M."/>
            <person name="Scherens B."/>
            <person name="Scholler P."/>
            <person name="Schwager C."/>
            <person name="Schwarz S."/>
            <person name="Underwood A.P."/>
            <person name="Urrestarazu L.A."/>
            <person name="Vandenbol M."/>
            <person name="Verhasselt P."/>
            <person name="Vierendeels F."/>
            <person name="Voet M."/>
            <person name="Volckaert G."/>
            <person name="Voss H."/>
            <person name="Wambutt R."/>
            <person name="Wedler E."/>
            <person name="Wedler H."/>
            <person name="Zimmermann F.K."/>
            <person name="Zollner A."/>
            <person name="Hani J."/>
            <person name="Hoheisel J.D."/>
        </authorList>
    </citation>
    <scope>NUCLEOTIDE SEQUENCE [LARGE SCALE GENOMIC DNA]</scope>
    <source>
        <strain>ATCC 204508 / S288c</strain>
    </source>
</reference>
<reference key="2">
    <citation type="journal article" date="2014" name="G3 (Bethesda)">
        <title>The reference genome sequence of Saccharomyces cerevisiae: Then and now.</title>
        <authorList>
            <person name="Engel S.R."/>
            <person name="Dietrich F.S."/>
            <person name="Fisk D.G."/>
            <person name="Binkley G."/>
            <person name="Balakrishnan R."/>
            <person name="Costanzo M.C."/>
            <person name="Dwight S.S."/>
            <person name="Hitz B.C."/>
            <person name="Karra K."/>
            <person name="Nash R.S."/>
            <person name="Weng S."/>
            <person name="Wong E.D."/>
            <person name="Lloyd P."/>
            <person name="Skrzypek M.S."/>
            <person name="Miyasato S.R."/>
            <person name="Simison M."/>
            <person name="Cherry J.M."/>
        </authorList>
    </citation>
    <scope>GENOME REANNOTATION</scope>
    <source>
        <strain>ATCC 204508 / S288c</strain>
    </source>
</reference>
<reference key="3">
    <citation type="journal article" date="2007" name="Genome Res.">
        <title>Approaching a complete repository of sequence-verified protein-encoding clones for Saccharomyces cerevisiae.</title>
        <authorList>
            <person name="Hu Y."/>
            <person name="Rolfs A."/>
            <person name="Bhullar B."/>
            <person name="Murthy T.V.S."/>
            <person name="Zhu C."/>
            <person name="Berger M.F."/>
            <person name="Camargo A.A."/>
            <person name="Kelley F."/>
            <person name="McCarron S."/>
            <person name="Jepson D."/>
            <person name="Richardson A."/>
            <person name="Raphael J."/>
            <person name="Moreira D."/>
            <person name="Taycher E."/>
            <person name="Zuo D."/>
            <person name="Mohr S."/>
            <person name="Kane M.F."/>
            <person name="Williamson J."/>
            <person name="Simpson A.J.G."/>
            <person name="Bulyk M.L."/>
            <person name="Harlow E."/>
            <person name="Marsischky G."/>
            <person name="Kolodner R.D."/>
            <person name="LaBaer J."/>
        </authorList>
    </citation>
    <scope>NUCLEOTIDE SEQUENCE [GENOMIC DNA]</scope>
    <source>
        <strain>ATCC 204508 / S288c</strain>
    </source>
</reference>
<reference key="4">
    <citation type="journal article" date="1997" name="Nucleic Acids Res.">
        <title>Variations of the C2H2 zinc finger motif in the yeast genome and classification of yeast zinc finger proteins.</title>
        <authorList>
            <person name="Boehm S."/>
            <person name="Frishman D."/>
            <person name="Mewes H.-W."/>
        </authorList>
    </citation>
    <scope>DOMAIN</scope>
</reference>
<reference key="5">
    <citation type="journal article" date="2001" name="Mol. Biol. Cell">
        <title>A genomic study of the bipolar bud site selection pattern in Saccharomyces cerevisiae.</title>
        <authorList>
            <person name="Ni L."/>
            <person name="Snyder M."/>
        </authorList>
    </citation>
    <scope>FUNCTION</scope>
    <scope>SUBCELLULAR LOCATION</scope>
</reference>
<reference key="6">
    <citation type="journal article" date="2003" name="Nature">
        <title>Global analysis of protein localization in budding yeast.</title>
        <authorList>
            <person name="Huh W.-K."/>
            <person name="Falvo J.V."/>
            <person name="Gerke L.C."/>
            <person name="Carroll A.S."/>
            <person name="Howson R.W."/>
            <person name="Weissman J.S."/>
            <person name="O'Shea E.K."/>
        </authorList>
    </citation>
    <scope>SUBCELLULAR LOCATION [LARGE SCALE ANALYSIS]</scope>
</reference>
<reference key="7">
    <citation type="journal article" date="2003" name="Nature">
        <title>Global analysis of protein expression in yeast.</title>
        <authorList>
            <person name="Ghaemmaghami S."/>
            <person name="Huh W.-K."/>
            <person name="Bower K."/>
            <person name="Howson R.W."/>
            <person name="Belle A."/>
            <person name="Dephoure N."/>
            <person name="O'Shea E.K."/>
            <person name="Weissman J.S."/>
        </authorList>
    </citation>
    <scope>LEVEL OF PROTEIN EXPRESSION [LARGE SCALE ANALYSIS]</scope>
</reference>
<reference key="8">
    <citation type="journal article" date="2012" name="Mol. Cell. Biol.">
        <title>The conserved Bud20 zinc finger protein is a new component of the ribosomal 60S subunit export machinery.</title>
        <authorList>
            <person name="Bassler J."/>
            <person name="Klein I."/>
            <person name="Schmidt C."/>
            <person name="Kallas M."/>
            <person name="Thomson E."/>
            <person name="Wagner M.A."/>
            <person name="Bradatsch B."/>
            <person name="Rechberger G."/>
            <person name="Strohmaier H."/>
            <person name="Hurt E."/>
            <person name="Bergler H."/>
        </authorList>
    </citation>
    <scope>FUNCTION</scope>
    <scope>SUBCELLULAR LOCATION</scope>
    <scope>INTERACTION WITH PRE-60S RIBOSOMAL PARTICLES</scope>
    <scope>MUTAGENESIS OF 7-LYS--ARG-16; 12-LYS--ARG-14; 17-ASP--VAL-31 AND 18-LEU--LEU-25</scope>
</reference>